<organism>
    <name type="scientific">Methanococcoides burtonii (strain DSM 6242 / NBRC 107633 / OCM 468 / ACE-M)</name>
    <dbReference type="NCBI Taxonomy" id="259564"/>
    <lineage>
        <taxon>Archaea</taxon>
        <taxon>Methanobacteriati</taxon>
        <taxon>Methanobacteriota</taxon>
        <taxon>Stenosarchaea group</taxon>
        <taxon>Methanomicrobia</taxon>
        <taxon>Methanosarcinales</taxon>
        <taxon>Methanosarcinaceae</taxon>
        <taxon>Methanococcoides</taxon>
    </lineage>
</organism>
<protein>
    <recommendedName>
        <fullName evidence="1">Exosome complex component Rrp4</fullName>
    </recommendedName>
</protein>
<name>RRP4_METBU</name>
<reference key="1">
    <citation type="journal article" date="2009" name="ISME J.">
        <title>The genome sequence of the psychrophilic archaeon, Methanococcoides burtonii: the role of genome evolution in cold adaptation.</title>
        <authorList>
            <person name="Allen M.A."/>
            <person name="Lauro F.M."/>
            <person name="Williams T.J."/>
            <person name="Burg D."/>
            <person name="Siddiqui K.S."/>
            <person name="De Francisci D."/>
            <person name="Chong K.W."/>
            <person name="Pilak O."/>
            <person name="Chew H.H."/>
            <person name="De Maere M.Z."/>
            <person name="Ting L."/>
            <person name="Katrib M."/>
            <person name="Ng C."/>
            <person name="Sowers K.R."/>
            <person name="Galperin M.Y."/>
            <person name="Anderson I.J."/>
            <person name="Ivanova N."/>
            <person name="Dalin E."/>
            <person name="Martinez M."/>
            <person name="Lapidus A."/>
            <person name="Hauser L."/>
            <person name="Land M."/>
            <person name="Thomas T."/>
            <person name="Cavicchioli R."/>
        </authorList>
    </citation>
    <scope>NUCLEOTIDE SEQUENCE [LARGE SCALE GENOMIC DNA]</scope>
    <source>
        <strain>DSM 6242 / NBRC 107633 / OCM 468 / ACE-M</strain>
    </source>
</reference>
<sequence length="263" mass="29124">MDRKIVIPGQLLSEKKEMAGPGTYVKNGNIYSLLYGIANFKGRVSVVPFSGKYIPSRKDFIIVNVIDVTPSNWIMETGSPYDGLLHVSEFPKRVDSSEMRKFMDVGDCVIVRVKDVSKAMKVELSMREQGSRALSKGRIIEVVPSKVPRVIGHGGSMVSILKKESNCDVFVGKNGRIWINGKDKDMDRLTTAIEMIESESHMSGLTDKVGMFLRGEPEGTEGSDEEQLVDEEVAGVSLEDDDVTEETSRKVDVLLDNDTDETN</sequence>
<dbReference type="EMBL" id="CP000300">
    <property type="protein sequence ID" value="ABE51208.1"/>
    <property type="molecule type" value="Genomic_DNA"/>
</dbReference>
<dbReference type="RefSeq" id="WP_011498370.1">
    <property type="nucleotide sequence ID" value="NC_007955.1"/>
</dbReference>
<dbReference type="SMR" id="Q12ZB8"/>
<dbReference type="STRING" id="259564.Mbur_0198"/>
<dbReference type="GeneID" id="3997165"/>
<dbReference type="KEGG" id="mbu:Mbur_0198"/>
<dbReference type="HOGENOM" id="CLU_071769_0_0_2"/>
<dbReference type="OrthoDB" id="35160at2157"/>
<dbReference type="Proteomes" id="UP000001979">
    <property type="component" value="Chromosome"/>
</dbReference>
<dbReference type="GO" id="GO:0005737">
    <property type="term" value="C:cytoplasm"/>
    <property type="evidence" value="ECO:0007669"/>
    <property type="project" value="UniProtKB-SubCell"/>
</dbReference>
<dbReference type="GO" id="GO:0000178">
    <property type="term" value="C:exosome (RNase complex)"/>
    <property type="evidence" value="ECO:0007669"/>
    <property type="project" value="UniProtKB-KW"/>
</dbReference>
<dbReference type="GO" id="GO:0008143">
    <property type="term" value="F:poly(A) binding"/>
    <property type="evidence" value="ECO:0007669"/>
    <property type="project" value="InterPro"/>
</dbReference>
<dbReference type="GO" id="GO:0071034">
    <property type="term" value="P:CUT catabolic process"/>
    <property type="evidence" value="ECO:0007669"/>
    <property type="project" value="TreeGrafter"/>
</dbReference>
<dbReference type="GO" id="GO:0000467">
    <property type="term" value="P:exonucleolytic trimming to generate mature 3'-end of 5.8S rRNA from tricistronic rRNA transcript (SSU-rRNA, 5.8S rRNA, LSU-rRNA)"/>
    <property type="evidence" value="ECO:0007669"/>
    <property type="project" value="TreeGrafter"/>
</dbReference>
<dbReference type="GO" id="GO:0071051">
    <property type="term" value="P:poly(A)-dependent snoRNA 3'-end processing"/>
    <property type="evidence" value="ECO:0007669"/>
    <property type="project" value="TreeGrafter"/>
</dbReference>
<dbReference type="GO" id="GO:0006401">
    <property type="term" value="P:RNA catabolic process"/>
    <property type="evidence" value="ECO:0007669"/>
    <property type="project" value="UniProtKB-UniRule"/>
</dbReference>
<dbReference type="GO" id="GO:0034475">
    <property type="term" value="P:U4 snRNA 3'-end processing"/>
    <property type="evidence" value="ECO:0007669"/>
    <property type="project" value="TreeGrafter"/>
</dbReference>
<dbReference type="CDD" id="cd22524">
    <property type="entry name" value="KH-I_Rrp4_prokar"/>
    <property type="match status" value="1"/>
</dbReference>
<dbReference type="CDD" id="cd05789">
    <property type="entry name" value="S1_Rrp4"/>
    <property type="match status" value="1"/>
</dbReference>
<dbReference type="Gene3D" id="2.40.50.100">
    <property type="match status" value="1"/>
</dbReference>
<dbReference type="Gene3D" id="3.30.1370.10">
    <property type="entry name" value="K Homology domain, type 1"/>
    <property type="match status" value="1"/>
</dbReference>
<dbReference type="Gene3D" id="2.40.50.140">
    <property type="entry name" value="Nucleic acid-binding proteins"/>
    <property type="match status" value="1"/>
</dbReference>
<dbReference type="HAMAP" id="MF_00623">
    <property type="entry name" value="Exosome_Rrp4"/>
    <property type="match status" value="1"/>
</dbReference>
<dbReference type="InterPro" id="IPR025721">
    <property type="entry name" value="Exosome_cplx_N_dom"/>
</dbReference>
<dbReference type="InterPro" id="IPR026699">
    <property type="entry name" value="Exosome_RNA_bind1/RRP40/RRP4"/>
</dbReference>
<dbReference type="InterPro" id="IPR004087">
    <property type="entry name" value="KH_dom"/>
</dbReference>
<dbReference type="InterPro" id="IPR004088">
    <property type="entry name" value="KH_dom_type_1"/>
</dbReference>
<dbReference type="InterPro" id="IPR036612">
    <property type="entry name" value="KH_dom_type_1_sf"/>
</dbReference>
<dbReference type="InterPro" id="IPR012340">
    <property type="entry name" value="NA-bd_OB-fold"/>
</dbReference>
<dbReference type="InterPro" id="IPR023474">
    <property type="entry name" value="Rrp4"/>
</dbReference>
<dbReference type="InterPro" id="IPR048565">
    <property type="entry name" value="RRP4_S1"/>
</dbReference>
<dbReference type="InterPro" id="IPR003029">
    <property type="entry name" value="S1_domain"/>
</dbReference>
<dbReference type="NCBIfam" id="NF003181">
    <property type="entry name" value="PRK04163.1-1"/>
    <property type="match status" value="1"/>
</dbReference>
<dbReference type="PANTHER" id="PTHR21321:SF4">
    <property type="entry name" value="EXOSOME COMPLEX COMPONENT RRP4"/>
    <property type="match status" value="1"/>
</dbReference>
<dbReference type="PANTHER" id="PTHR21321">
    <property type="entry name" value="PNAS-3 RELATED"/>
    <property type="match status" value="1"/>
</dbReference>
<dbReference type="Pfam" id="PF14382">
    <property type="entry name" value="ECR1_N"/>
    <property type="match status" value="1"/>
</dbReference>
<dbReference type="Pfam" id="PF15985">
    <property type="entry name" value="KH_6"/>
    <property type="match status" value="1"/>
</dbReference>
<dbReference type="SMART" id="SM00322">
    <property type="entry name" value="KH"/>
    <property type="match status" value="1"/>
</dbReference>
<dbReference type="SMART" id="SM00316">
    <property type="entry name" value="S1"/>
    <property type="match status" value="1"/>
</dbReference>
<dbReference type="SUPFAM" id="SSF54791">
    <property type="entry name" value="Eukaryotic type KH-domain (KH-domain type I)"/>
    <property type="match status" value="1"/>
</dbReference>
<dbReference type="SUPFAM" id="SSF50249">
    <property type="entry name" value="Nucleic acid-binding proteins"/>
    <property type="match status" value="1"/>
</dbReference>
<dbReference type="SUPFAM" id="SSF110324">
    <property type="entry name" value="Ribosomal L27 protein-like"/>
    <property type="match status" value="1"/>
</dbReference>
<dbReference type="PROSITE" id="PS50084">
    <property type="entry name" value="KH_TYPE_1"/>
    <property type="match status" value="1"/>
</dbReference>
<dbReference type="PROSITE" id="PS50126">
    <property type="entry name" value="S1"/>
    <property type="match status" value="1"/>
</dbReference>
<accession>Q12ZB8</accession>
<feature type="chain" id="PRO_0000416231" description="Exosome complex component Rrp4">
    <location>
        <begin position="1"/>
        <end position="263"/>
    </location>
</feature>
<feature type="domain" description="S1 motif" evidence="1">
    <location>
        <begin position="51"/>
        <end position="127"/>
    </location>
</feature>
<feature type="domain" description="KH" evidence="1">
    <location>
        <begin position="135"/>
        <end position="196"/>
    </location>
</feature>
<feature type="region of interest" description="Disordered" evidence="2">
    <location>
        <begin position="213"/>
        <end position="263"/>
    </location>
</feature>
<feature type="compositionally biased region" description="Acidic residues" evidence="2">
    <location>
        <begin position="218"/>
        <end position="245"/>
    </location>
</feature>
<proteinExistence type="inferred from homology"/>
<comment type="function">
    <text evidence="1">Non-catalytic component of the exosome, which is a complex involved in RNA degradation. Increases the RNA binding and the efficiency of RNA degradation. Confers strong poly(A) specificity to the exosome.</text>
</comment>
<comment type="subunit">
    <text evidence="1">Component of the archaeal exosome complex. Forms a trimer of Rrp4 and/or Csl4 subunits. The trimer associates with a hexameric ring-like arrangement composed of 3 Rrp41-Rrp42 heterodimers.</text>
</comment>
<comment type="subcellular location">
    <subcellularLocation>
        <location evidence="1">Cytoplasm</location>
    </subcellularLocation>
</comment>
<comment type="similarity">
    <text evidence="1">Belongs to the RRP4 family.</text>
</comment>
<keyword id="KW-0963">Cytoplasm</keyword>
<keyword id="KW-0271">Exosome</keyword>
<keyword id="KW-0694">RNA-binding</keyword>
<gene>
    <name evidence="1" type="primary">rrp4</name>
    <name type="ordered locus">Mbur_0198</name>
</gene>
<evidence type="ECO:0000255" key="1">
    <source>
        <dbReference type="HAMAP-Rule" id="MF_00623"/>
    </source>
</evidence>
<evidence type="ECO:0000256" key="2">
    <source>
        <dbReference type="SAM" id="MobiDB-lite"/>
    </source>
</evidence>